<proteinExistence type="evidence at protein level"/>
<feature type="chain" id="PRO_0000225680" description="NF-kappa-B inhibitor-interacting Ras-like protein 2">
    <location>
        <begin position="1"/>
        <end position="191"/>
    </location>
</feature>
<feature type="region of interest" description="Small GTPase-like">
    <location>
        <begin position="1"/>
        <end position="191"/>
    </location>
</feature>
<feature type="region of interest" description="Disordered" evidence="3">
    <location>
        <begin position="169"/>
        <end position="191"/>
    </location>
</feature>
<feature type="short sequence motif" description="Effector region">
    <location>
        <begin position="35"/>
        <end position="43"/>
    </location>
</feature>
<feature type="binding site" evidence="1">
    <location>
        <begin position="11"/>
        <end position="18"/>
    </location>
    <ligand>
        <name>GTP</name>
        <dbReference type="ChEBI" id="CHEBI:37565"/>
    </ligand>
</feature>
<feature type="binding site" evidence="1">
    <location>
        <begin position="61"/>
        <end position="65"/>
    </location>
    <ligand>
        <name>GTP</name>
        <dbReference type="ChEBI" id="CHEBI:37565"/>
    </ligand>
</feature>
<feature type="binding site" evidence="1">
    <location>
        <begin position="120"/>
        <end position="123"/>
    </location>
    <ligand>
        <name>GTP</name>
        <dbReference type="ChEBI" id="CHEBI:37565"/>
    </ligand>
</feature>
<feature type="sequence conflict" description="In Ref. 1; BAC35078." evidence="4" ref="1">
    <original>V</original>
    <variation>E</variation>
    <location>
        <position position="57"/>
    </location>
</feature>
<organism>
    <name type="scientific">Mus musculus</name>
    <name type="common">Mouse</name>
    <dbReference type="NCBI Taxonomy" id="10090"/>
    <lineage>
        <taxon>Eukaryota</taxon>
        <taxon>Metazoa</taxon>
        <taxon>Chordata</taxon>
        <taxon>Craniata</taxon>
        <taxon>Vertebrata</taxon>
        <taxon>Euteleostomi</taxon>
        <taxon>Mammalia</taxon>
        <taxon>Eutheria</taxon>
        <taxon>Euarchontoglires</taxon>
        <taxon>Glires</taxon>
        <taxon>Rodentia</taxon>
        <taxon>Myomorpha</taxon>
        <taxon>Muroidea</taxon>
        <taxon>Muridae</taxon>
        <taxon>Murinae</taxon>
        <taxon>Mus</taxon>
        <taxon>Mus</taxon>
    </lineage>
</organism>
<reference key="1">
    <citation type="journal article" date="2005" name="Science">
        <title>The transcriptional landscape of the mammalian genome.</title>
        <authorList>
            <person name="Carninci P."/>
            <person name="Kasukawa T."/>
            <person name="Katayama S."/>
            <person name="Gough J."/>
            <person name="Frith M.C."/>
            <person name="Maeda N."/>
            <person name="Oyama R."/>
            <person name="Ravasi T."/>
            <person name="Lenhard B."/>
            <person name="Wells C."/>
            <person name="Kodzius R."/>
            <person name="Shimokawa K."/>
            <person name="Bajic V.B."/>
            <person name="Brenner S.E."/>
            <person name="Batalov S."/>
            <person name="Forrest A.R."/>
            <person name="Zavolan M."/>
            <person name="Davis M.J."/>
            <person name="Wilming L.G."/>
            <person name="Aidinis V."/>
            <person name="Allen J.E."/>
            <person name="Ambesi-Impiombato A."/>
            <person name="Apweiler R."/>
            <person name="Aturaliya R.N."/>
            <person name="Bailey T.L."/>
            <person name="Bansal M."/>
            <person name="Baxter L."/>
            <person name="Beisel K.W."/>
            <person name="Bersano T."/>
            <person name="Bono H."/>
            <person name="Chalk A.M."/>
            <person name="Chiu K.P."/>
            <person name="Choudhary V."/>
            <person name="Christoffels A."/>
            <person name="Clutterbuck D.R."/>
            <person name="Crowe M.L."/>
            <person name="Dalla E."/>
            <person name="Dalrymple B.P."/>
            <person name="de Bono B."/>
            <person name="Della Gatta G."/>
            <person name="di Bernardo D."/>
            <person name="Down T."/>
            <person name="Engstrom P."/>
            <person name="Fagiolini M."/>
            <person name="Faulkner G."/>
            <person name="Fletcher C.F."/>
            <person name="Fukushima T."/>
            <person name="Furuno M."/>
            <person name="Futaki S."/>
            <person name="Gariboldi M."/>
            <person name="Georgii-Hemming P."/>
            <person name="Gingeras T.R."/>
            <person name="Gojobori T."/>
            <person name="Green R.E."/>
            <person name="Gustincich S."/>
            <person name="Harbers M."/>
            <person name="Hayashi Y."/>
            <person name="Hensch T.K."/>
            <person name="Hirokawa N."/>
            <person name="Hill D."/>
            <person name="Huminiecki L."/>
            <person name="Iacono M."/>
            <person name="Ikeo K."/>
            <person name="Iwama A."/>
            <person name="Ishikawa T."/>
            <person name="Jakt M."/>
            <person name="Kanapin A."/>
            <person name="Katoh M."/>
            <person name="Kawasawa Y."/>
            <person name="Kelso J."/>
            <person name="Kitamura H."/>
            <person name="Kitano H."/>
            <person name="Kollias G."/>
            <person name="Krishnan S.P."/>
            <person name="Kruger A."/>
            <person name="Kummerfeld S.K."/>
            <person name="Kurochkin I.V."/>
            <person name="Lareau L.F."/>
            <person name="Lazarevic D."/>
            <person name="Lipovich L."/>
            <person name="Liu J."/>
            <person name="Liuni S."/>
            <person name="McWilliam S."/>
            <person name="Madan Babu M."/>
            <person name="Madera M."/>
            <person name="Marchionni L."/>
            <person name="Matsuda H."/>
            <person name="Matsuzawa S."/>
            <person name="Miki H."/>
            <person name="Mignone F."/>
            <person name="Miyake S."/>
            <person name="Morris K."/>
            <person name="Mottagui-Tabar S."/>
            <person name="Mulder N."/>
            <person name="Nakano N."/>
            <person name="Nakauchi H."/>
            <person name="Ng P."/>
            <person name="Nilsson R."/>
            <person name="Nishiguchi S."/>
            <person name="Nishikawa S."/>
            <person name="Nori F."/>
            <person name="Ohara O."/>
            <person name="Okazaki Y."/>
            <person name="Orlando V."/>
            <person name="Pang K.C."/>
            <person name="Pavan W.J."/>
            <person name="Pavesi G."/>
            <person name="Pesole G."/>
            <person name="Petrovsky N."/>
            <person name="Piazza S."/>
            <person name="Reed J."/>
            <person name="Reid J.F."/>
            <person name="Ring B.Z."/>
            <person name="Ringwald M."/>
            <person name="Rost B."/>
            <person name="Ruan Y."/>
            <person name="Salzberg S.L."/>
            <person name="Sandelin A."/>
            <person name="Schneider C."/>
            <person name="Schoenbach C."/>
            <person name="Sekiguchi K."/>
            <person name="Semple C.A."/>
            <person name="Seno S."/>
            <person name="Sessa L."/>
            <person name="Sheng Y."/>
            <person name="Shibata Y."/>
            <person name="Shimada H."/>
            <person name="Shimada K."/>
            <person name="Silva D."/>
            <person name="Sinclair B."/>
            <person name="Sperling S."/>
            <person name="Stupka E."/>
            <person name="Sugiura K."/>
            <person name="Sultana R."/>
            <person name="Takenaka Y."/>
            <person name="Taki K."/>
            <person name="Tammoja K."/>
            <person name="Tan S.L."/>
            <person name="Tang S."/>
            <person name="Taylor M.S."/>
            <person name="Tegner J."/>
            <person name="Teichmann S.A."/>
            <person name="Ueda H.R."/>
            <person name="van Nimwegen E."/>
            <person name="Verardo R."/>
            <person name="Wei C.L."/>
            <person name="Yagi K."/>
            <person name="Yamanishi H."/>
            <person name="Zabarovsky E."/>
            <person name="Zhu S."/>
            <person name="Zimmer A."/>
            <person name="Hide W."/>
            <person name="Bult C."/>
            <person name="Grimmond S.M."/>
            <person name="Teasdale R.D."/>
            <person name="Liu E.T."/>
            <person name="Brusic V."/>
            <person name="Quackenbush J."/>
            <person name="Wahlestedt C."/>
            <person name="Mattick J.S."/>
            <person name="Hume D.A."/>
            <person name="Kai C."/>
            <person name="Sasaki D."/>
            <person name="Tomaru Y."/>
            <person name="Fukuda S."/>
            <person name="Kanamori-Katayama M."/>
            <person name="Suzuki M."/>
            <person name="Aoki J."/>
            <person name="Arakawa T."/>
            <person name="Iida J."/>
            <person name="Imamura K."/>
            <person name="Itoh M."/>
            <person name="Kato T."/>
            <person name="Kawaji H."/>
            <person name="Kawagashira N."/>
            <person name="Kawashima T."/>
            <person name="Kojima M."/>
            <person name="Kondo S."/>
            <person name="Konno H."/>
            <person name="Nakano K."/>
            <person name="Ninomiya N."/>
            <person name="Nishio T."/>
            <person name="Okada M."/>
            <person name="Plessy C."/>
            <person name="Shibata K."/>
            <person name="Shiraki T."/>
            <person name="Suzuki S."/>
            <person name="Tagami M."/>
            <person name="Waki K."/>
            <person name="Watahiki A."/>
            <person name="Okamura-Oho Y."/>
            <person name="Suzuki H."/>
            <person name="Kawai J."/>
            <person name="Hayashizaki Y."/>
        </authorList>
    </citation>
    <scope>NUCLEOTIDE SEQUENCE [LARGE SCALE MRNA]</scope>
    <source>
        <strain>C57BL/6J</strain>
        <strain>NOD</strain>
        <tissue>Bone marrow</tissue>
        <tissue>Kidney</tissue>
        <tissue>Testis</tissue>
    </source>
</reference>
<reference key="2">
    <citation type="journal article" date="2004" name="Genome Res.">
        <title>The status, quality, and expansion of the NIH full-length cDNA project: the Mammalian Gene Collection (MGC).</title>
        <authorList>
            <consortium name="The MGC Project Team"/>
        </authorList>
    </citation>
    <scope>NUCLEOTIDE SEQUENCE [LARGE SCALE MRNA]</scope>
    <source>
        <strain>FVB/N</strain>
        <strain>FVB/N-3</strain>
        <tissue>Colon</tissue>
        <tissue>Mammary tumor</tissue>
    </source>
</reference>
<reference key="3">
    <citation type="journal article" date="2010" name="Cell">
        <title>A tissue-specific atlas of mouse protein phosphorylation and expression.</title>
        <authorList>
            <person name="Huttlin E.L."/>
            <person name="Jedrychowski M.P."/>
            <person name="Elias J.E."/>
            <person name="Goswami T."/>
            <person name="Rad R."/>
            <person name="Beausoleil S.A."/>
            <person name="Villen J."/>
            <person name="Haas W."/>
            <person name="Sowa M.E."/>
            <person name="Gygi S.P."/>
        </authorList>
    </citation>
    <scope>IDENTIFICATION BY MASS SPECTROMETRY [LARGE SCALE ANALYSIS]</scope>
    <source>
        <tissue>Testis</tissue>
    </source>
</reference>
<gene>
    <name type="primary">Nkiras2</name>
</gene>
<keyword id="KW-0963">Cytoplasm</keyword>
<keyword id="KW-0342">GTP-binding</keyword>
<keyword id="KW-0547">Nucleotide-binding</keyword>
<keyword id="KW-1185">Reference proteome</keyword>
<evidence type="ECO:0000250" key="1"/>
<evidence type="ECO:0000250" key="2">
    <source>
        <dbReference type="UniProtKB" id="Q9NYR9"/>
    </source>
</evidence>
<evidence type="ECO:0000256" key="3">
    <source>
        <dbReference type="SAM" id="MobiDB-lite"/>
    </source>
</evidence>
<evidence type="ECO:0000305" key="4"/>
<name>KBRS2_MOUSE</name>
<accession>Q9CR56</accession>
<accession>Q8BWG0</accession>
<dbReference type="EMBL" id="AK010371">
    <property type="protein sequence ID" value="BAB26889.1"/>
    <property type="molecule type" value="mRNA"/>
</dbReference>
<dbReference type="EMBL" id="AK015918">
    <property type="protein sequence ID" value="BAB30030.1"/>
    <property type="molecule type" value="mRNA"/>
</dbReference>
<dbReference type="EMBL" id="AK052645">
    <property type="protein sequence ID" value="BAC35078.1"/>
    <property type="molecule type" value="mRNA"/>
</dbReference>
<dbReference type="EMBL" id="AK083475">
    <property type="protein sequence ID" value="BAC38929.1"/>
    <property type="molecule type" value="mRNA"/>
</dbReference>
<dbReference type="EMBL" id="AK149696">
    <property type="protein sequence ID" value="BAE29033.1"/>
    <property type="molecule type" value="mRNA"/>
</dbReference>
<dbReference type="EMBL" id="AK169878">
    <property type="protein sequence ID" value="BAE41430.1"/>
    <property type="molecule type" value="mRNA"/>
</dbReference>
<dbReference type="EMBL" id="BC013469">
    <property type="protein sequence ID" value="AAH13469.1"/>
    <property type="molecule type" value="mRNA"/>
</dbReference>
<dbReference type="EMBL" id="BC024398">
    <property type="protein sequence ID" value="AAH24398.1"/>
    <property type="molecule type" value="mRNA"/>
</dbReference>
<dbReference type="CCDS" id="CCDS25429.1"/>
<dbReference type="RefSeq" id="NP_082300.1">
    <property type="nucleotide sequence ID" value="NM_028024.2"/>
</dbReference>
<dbReference type="RefSeq" id="XP_017170264.1">
    <property type="nucleotide sequence ID" value="XM_017314775.1"/>
</dbReference>
<dbReference type="RefSeq" id="XP_017170265.1">
    <property type="nucleotide sequence ID" value="XM_017314776.1"/>
</dbReference>
<dbReference type="RefSeq" id="XP_030102201.1">
    <property type="nucleotide sequence ID" value="XM_030246341.1"/>
</dbReference>
<dbReference type="SMR" id="Q9CR56"/>
<dbReference type="BioGRID" id="215060">
    <property type="interactions" value="1"/>
</dbReference>
<dbReference type="FunCoup" id="Q9CR56">
    <property type="interactions" value="775"/>
</dbReference>
<dbReference type="STRING" id="10090.ENSMUSP00000017981"/>
<dbReference type="iPTMnet" id="Q9CR56"/>
<dbReference type="PhosphoSitePlus" id="Q9CR56"/>
<dbReference type="SwissPalm" id="Q9CR56"/>
<dbReference type="PaxDb" id="10090-ENSMUSP00000017981"/>
<dbReference type="PeptideAtlas" id="Q9CR56"/>
<dbReference type="ProteomicsDB" id="301752"/>
<dbReference type="Pumba" id="Q9CR56"/>
<dbReference type="Antibodypedia" id="79897">
    <property type="antibodies" value="210 antibodies from 30 providers"/>
</dbReference>
<dbReference type="DNASU" id="71966"/>
<dbReference type="Ensembl" id="ENSMUST00000017981.10">
    <property type="protein sequence ID" value="ENSMUSP00000017981.4"/>
    <property type="gene ID" value="ENSMUSG00000017837.13"/>
</dbReference>
<dbReference type="Ensembl" id="ENSMUST00000051947.10">
    <property type="protein sequence ID" value="ENSMUSP00000059559.4"/>
    <property type="gene ID" value="ENSMUSG00000017837.13"/>
</dbReference>
<dbReference type="Ensembl" id="ENSMUST00000107376.8">
    <property type="protein sequence ID" value="ENSMUSP00000102999.2"/>
    <property type="gene ID" value="ENSMUSG00000017837.13"/>
</dbReference>
<dbReference type="GeneID" id="71966"/>
<dbReference type="KEGG" id="mmu:71966"/>
<dbReference type="UCSC" id="uc007llt.1">
    <property type="organism name" value="mouse"/>
</dbReference>
<dbReference type="AGR" id="MGI:1919216"/>
<dbReference type="CTD" id="28511"/>
<dbReference type="MGI" id="MGI:1919216">
    <property type="gene designation" value="Nkiras2"/>
</dbReference>
<dbReference type="VEuPathDB" id="HostDB:ENSMUSG00000017837"/>
<dbReference type="eggNOG" id="KOG3883">
    <property type="taxonomic scope" value="Eukaryota"/>
</dbReference>
<dbReference type="GeneTree" id="ENSGT00940000157943"/>
<dbReference type="HOGENOM" id="CLU_041217_17_1_1"/>
<dbReference type="InParanoid" id="Q9CR56"/>
<dbReference type="OMA" id="IMDRANN"/>
<dbReference type="OrthoDB" id="10002389at2759"/>
<dbReference type="PhylomeDB" id="Q9CR56"/>
<dbReference type="TreeFam" id="TF314483"/>
<dbReference type="Reactome" id="R-MMU-1810476">
    <property type="pathway name" value="RIP-mediated NFkB activation via ZBP1"/>
</dbReference>
<dbReference type="Reactome" id="R-MMU-445989">
    <property type="pathway name" value="TAK1-dependent IKK and NF-kappa-B activation"/>
</dbReference>
<dbReference type="Reactome" id="R-MMU-933542">
    <property type="pathway name" value="TRAF6 mediated NF-kB activation"/>
</dbReference>
<dbReference type="BioGRID-ORCS" id="71966">
    <property type="hits" value="2 hits in 77 CRISPR screens"/>
</dbReference>
<dbReference type="ChiTaRS" id="Nkiras2">
    <property type="organism name" value="mouse"/>
</dbReference>
<dbReference type="PRO" id="PR:Q9CR56"/>
<dbReference type="Proteomes" id="UP000000589">
    <property type="component" value="Chromosome 11"/>
</dbReference>
<dbReference type="RNAct" id="Q9CR56">
    <property type="molecule type" value="protein"/>
</dbReference>
<dbReference type="Bgee" id="ENSMUSG00000017837">
    <property type="expression patterns" value="Expressed in spermatocyte and 230 other cell types or tissues"/>
</dbReference>
<dbReference type="ExpressionAtlas" id="Q9CR56">
    <property type="expression patterns" value="baseline and differential"/>
</dbReference>
<dbReference type="GO" id="GO:0005737">
    <property type="term" value="C:cytoplasm"/>
    <property type="evidence" value="ECO:0007669"/>
    <property type="project" value="UniProtKB-SubCell"/>
</dbReference>
<dbReference type="GO" id="GO:0005525">
    <property type="term" value="F:GTP binding"/>
    <property type="evidence" value="ECO:0007669"/>
    <property type="project" value="UniProtKB-KW"/>
</dbReference>
<dbReference type="GO" id="GO:0032794">
    <property type="term" value="F:GTPase activating protein binding"/>
    <property type="evidence" value="ECO:0000353"/>
    <property type="project" value="MGI"/>
</dbReference>
<dbReference type="GO" id="GO:0003924">
    <property type="term" value="F:GTPase activity"/>
    <property type="evidence" value="ECO:0007669"/>
    <property type="project" value="InterPro"/>
</dbReference>
<dbReference type="GO" id="GO:0006954">
    <property type="term" value="P:inflammatory response"/>
    <property type="evidence" value="ECO:0000315"/>
    <property type="project" value="MGI"/>
</dbReference>
<dbReference type="GO" id="GO:0048286">
    <property type="term" value="P:lung alveolus development"/>
    <property type="evidence" value="ECO:0000316"/>
    <property type="project" value="MGI"/>
</dbReference>
<dbReference type="GO" id="GO:0043124">
    <property type="term" value="P:negative regulation of canonical NF-kappaB signal transduction"/>
    <property type="evidence" value="ECO:0007669"/>
    <property type="project" value="InterPro"/>
</dbReference>
<dbReference type="GO" id="GO:0032484">
    <property type="term" value="P:Ral protein signal transduction"/>
    <property type="evidence" value="ECO:0000316"/>
    <property type="project" value="MGI"/>
</dbReference>
<dbReference type="GO" id="GO:0043122">
    <property type="term" value="P:regulation of canonical NF-kappaB signal transduction"/>
    <property type="evidence" value="ECO:0000315"/>
    <property type="project" value="MGI"/>
</dbReference>
<dbReference type="GO" id="GO:0010803">
    <property type="term" value="P:regulation of tumor necrosis factor-mediated signaling pathway"/>
    <property type="evidence" value="ECO:0000316"/>
    <property type="project" value="MGI"/>
</dbReference>
<dbReference type="GO" id="GO:0043129">
    <property type="term" value="P:surfactant homeostasis"/>
    <property type="evidence" value="ECO:0000316"/>
    <property type="project" value="MGI"/>
</dbReference>
<dbReference type="Gene3D" id="3.40.50.300">
    <property type="entry name" value="P-loop containing nucleotide triphosphate hydrolases"/>
    <property type="match status" value="1"/>
</dbReference>
<dbReference type="InterPro" id="IPR042227">
    <property type="entry name" value="KBRS"/>
</dbReference>
<dbReference type="InterPro" id="IPR027417">
    <property type="entry name" value="P-loop_NTPase"/>
</dbReference>
<dbReference type="InterPro" id="IPR005225">
    <property type="entry name" value="Small_GTP-bd"/>
</dbReference>
<dbReference type="InterPro" id="IPR001806">
    <property type="entry name" value="Small_GTPase"/>
</dbReference>
<dbReference type="NCBIfam" id="TIGR00231">
    <property type="entry name" value="small_GTP"/>
    <property type="match status" value="1"/>
</dbReference>
<dbReference type="PANTHER" id="PTHR46152">
    <property type="entry name" value="NF-KAPPA-B INHIBITOR-INTERACTING RAS-LIKE PROTEIN"/>
    <property type="match status" value="1"/>
</dbReference>
<dbReference type="PANTHER" id="PTHR46152:SF2">
    <property type="entry name" value="NF-KAPPA-B INHIBITOR-INTERACTING RAS-LIKE PROTEIN 2"/>
    <property type="match status" value="1"/>
</dbReference>
<dbReference type="Pfam" id="PF00071">
    <property type="entry name" value="Ras"/>
    <property type="match status" value="1"/>
</dbReference>
<dbReference type="PRINTS" id="PR00449">
    <property type="entry name" value="RASTRNSFRMNG"/>
</dbReference>
<dbReference type="SMART" id="SM00175">
    <property type="entry name" value="RAB"/>
    <property type="match status" value="1"/>
</dbReference>
<dbReference type="SMART" id="SM00173">
    <property type="entry name" value="RAS"/>
    <property type="match status" value="1"/>
</dbReference>
<dbReference type="SUPFAM" id="SSF52540">
    <property type="entry name" value="P-loop containing nucleoside triphosphate hydrolases"/>
    <property type="match status" value="1"/>
</dbReference>
<dbReference type="PROSITE" id="PS51419">
    <property type="entry name" value="RAB"/>
    <property type="match status" value="1"/>
</dbReference>
<sequence length="191" mass="21494">MGKSCKVVVCGQASVGKTSILEQLLYGNHVVGSEMIETQEDIYVGSIETDRGVREQVRFYDTRGLRDGAELPKHCFSCTDGYVLVYSTDSRESFQRVELLKKEIDKSKDKKEVTIVVLGNKCDLQEQRRVDPDVAQHWAKSEKVKLWEVSVADRRSLLEPFIYLASKMTQPQSKSAFPLSRKNKGSGSLDG</sequence>
<protein>
    <recommendedName>
        <fullName>NF-kappa-B inhibitor-interacting Ras-like protein 2</fullName>
    </recommendedName>
    <alternativeName>
        <fullName>I-kappa-B-interacting Ras-like protein 2</fullName>
        <shortName>Kappa B-Ras protein 2</shortName>
        <shortName>KappaB-Ras2</shortName>
    </alternativeName>
</protein>
<comment type="function">
    <text evidence="1">Atypical Ras-like protein that acts as a potent regulator of NF-kappa-B activity by preventing the degradation of NF-kappa-B inhibitor beta (NFKBIB) by most signals, explaining why NFKBIB is more resistant to degradation. May act by blocking phosphorylation of NFKBIB and nuclear localization of p65/RELA NF-kappa-B subunit. It is unclear whether it acts as a GTPase. Both GTP- and GDP-bound forms block phosphorylation of NFKBIB (By similarity).</text>
</comment>
<comment type="subunit">
    <text evidence="2">Interacts with both NF-kappa-B inhibitor alpha (NFKBIA) and beta (NFKBIB) in vitro. However, it probably only interacts with NFKBIB in vivo. Interacts with GFOD1.</text>
</comment>
<comment type="subcellular location">
    <subcellularLocation>
        <location evidence="1">Cytoplasm</location>
    </subcellularLocation>
</comment>
<comment type="domain">
    <text>In contrast to other members of the Ras family, the members of the KappaB-Ras subfamily do not contain the conserved Gly and Gln residues in positions 13 and 65, which are replaced by Ala and Leu residues, respectively, and are therefore similar to the constitutively active forms of oncogenic forms of Ras. This suggests that members of this family are clearly different from other small GTPases proteins.</text>
</comment>
<comment type="similarity">
    <text evidence="4">Belongs to the small GTPase superfamily. Ras family. KappaB-Ras subfamily.</text>
</comment>